<proteinExistence type="inferred from homology"/>
<comment type="catalytic activity">
    <reaction evidence="1">
        <text>tRNA(Arg) + L-arginine + ATP = L-arginyl-tRNA(Arg) + AMP + diphosphate</text>
        <dbReference type="Rhea" id="RHEA:20301"/>
        <dbReference type="Rhea" id="RHEA-COMP:9658"/>
        <dbReference type="Rhea" id="RHEA-COMP:9673"/>
        <dbReference type="ChEBI" id="CHEBI:30616"/>
        <dbReference type="ChEBI" id="CHEBI:32682"/>
        <dbReference type="ChEBI" id="CHEBI:33019"/>
        <dbReference type="ChEBI" id="CHEBI:78442"/>
        <dbReference type="ChEBI" id="CHEBI:78513"/>
        <dbReference type="ChEBI" id="CHEBI:456215"/>
        <dbReference type="EC" id="6.1.1.19"/>
    </reaction>
</comment>
<comment type="subunit">
    <text evidence="1">Monomer.</text>
</comment>
<comment type="subcellular location">
    <subcellularLocation>
        <location evidence="1">Cytoplasm</location>
    </subcellularLocation>
</comment>
<comment type="similarity">
    <text evidence="1">Belongs to the class-I aminoacyl-tRNA synthetase family.</text>
</comment>
<reference key="1">
    <citation type="journal article" date="2005" name="J. Bacteriol.">
        <title>Swine and poultry pathogens: the complete genome sequences of two strains of Mycoplasma hyopneumoniae and a strain of Mycoplasma synoviae.</title>
        <authorList>
            <person name="Vasconcelos A.T.R."/>
            <person name="Ferreira H.B."/>
            <person name="Bizarro C.V."/>
            <person name="Bonatto S.L."/>
            <person name="Carvalho M.O."/>
            <person name="Pinto P.M."/>
            <person name="Almeida D.F."/>
            <person name="Almeida L.G.P."/>
            <person name="Almeida R."/>
            <person name="Alves-Junior L."/>
            <person name="Assuncao E.N."/>
            <person name="Azevedo V.A.C."/>
            <person name="Bogo M.R."/>
            <person name="Brigido M.M."/>
            <person name="Brocchi M."/>
            <person name="Burity H.A."/>
            <person name="Camargo A.A."/>
            <person name="Camargo S.S."/>
            <person name="Carepo M.S."/>
            <person name="Carraro D.M."/>
            <person name="de Mattos Cascardo J.C."/>
            <person name="Castro L.A."/>
            <person name="Cavalcanti G."/>
            <person name="Chemale G."/>
            <person name="Collevatti R.G."/>
            <person name="Cunha C.W."/>
            <person name="Dallagiovanna B."/>
            <person name="Dambros B.P."/>
            <person name="Dellagostin O.A."/>
            <person name="Falcao C."/>
            <person name="Fantinatti-Garboggini F."/>
            <person name="Felipe M.S.S."/>
            <person name="Fiorentin L."/>
            <person name="Franco G.R."/>
            <person name="Freitas N.S.A."/>
            <person name="Frias D."/>
            <person name="Grangeiro T.B."/>
            <person name="Grisard E.C."/>
            <person name="Guimaraes C.T."/>
            <person name="Hungria M."/>
            <person name="Jardim S.N."/>
            <person name="Krieger M.A."/>
            <person name="Laurino J.P."/>
            <person name="Lima L.F.A."/>
            <person name="Lopes M.I."/>
            <person name="Loreto E.L.S."/>
            <person name="Madeira H.M.F."/>
            <person name="Manfio G.P."/>
            <person name="Maranhao A.Q."/>
            <person name="Martinkovics C.T."/>
            <person name="Medeiros S.R.B."/>
            <person name="Moreira M.A.M."/>
            <person name="Neiva M."/>
            <person name="Ramalho-Neto C.E."/>
            <person name="Nicolas M.F."/>
            <person name="Oliveira S.C."/>
            <person name="Paixao R.F.C."/>
            <person name="Pedrosa F.O."/>
            <person name="Pena S.D.J."/>
            <person name="Pereira M."/>
            <person name="Pereira-Ferrari L."/>
            <person name="Piffer I."/>
            <person name="Pinto L.S."/>
            <person name="Potrich D.P."/>
            <person name="Salim A.C.M."/>
            <person name="Santos F.R."/>
            <person name="Schmitt R."/>
            <person name="Schneider M.P.C."/>
            <person name="Schrank A."/>
            <person name="Schrank I.S."/>
            <person name="Schuck A.F."/>
            <person name="Seuanez H.N."/>
            <person name="Silva D.W."/>
            <person name="Silva R."/>
            <person name="Silva S.C."/>
            <person name="Soares C.M.A."/>
            <person name="Souza K.R.L."/>
            <person name="Souza R.C."/>
            <person name="Staats C.C."/>
            <person name="Steffens M.B.R."/>
            <person name="Teixeira S.M.R."/>
            <person name="Urmenyi T.P."/>
            <person name="Vainstein M.H."/>
            <person name="Zuccherato L.W."/>
            <person name="Simpson A.J.G."/>
            <person name="Zaha A."/>
        </authorList>
    </citation>
    <scope>NUCLEOTIDE SEQUENCE [LARGE SCALE GENOMIC DNA]</scope>
    <source>
        <strain>7448</strain>
    </source>
</reference>
<feature type="chain" id="PRO_0000242048" description="Arginine--tRNA ligase">
    <location>
        <begin position="1"/>
        <end position="534"/>
    </location>
</feature>
<feature type="short sequence motif" description="'HIGH' region">
    <location>
        <begin position="120"/>
        <end position="130"/>
    </location>
</feature>
<name>SYR_MESH7</name>
<gene>
    <name evidence="1" type="primary">argS</name>
    <name type="ordered locus">MHP7448_0012</name>
</gene>
<accession>Q4A900</accession>
<evidence type="ECO:0000255" key="1">
    <source>
        <dbReference type="HAMAP-Rule" id="MF_00123"/>
    </source>
</evidence>
<protein>
    <recommendedName>
        <fullName evidence="1">Arginine--tRNA ligase</fullName>
        <ecNumber evidence="1">6.1.1.19</ecNumber>
    </recommendedName>
    <alternativeName>
        <fullName evidence="1">Arginyl-tRNA synthetase</fullName>
        <shortName evidence="1">ArgRS</shortName>
    </alternativeName>
</protein>
<sequence length="534" mass="61716">MKKKISQAIIKFFKNENLIIDESKLIIEKSKNFGDYSSNVALMFAKQNKIDSLKLAQTIKNQLLSENLNLEKIEIAPPGFINFFISKNEYANIVSEIIQKGENFGRYSLQKKINLEFVSANPTGFLHLGHLRGAVIGDILANILEFSGNFVFREYYINDFGSQIDRLVSSVFSRYQQIFKKFALPEEAYLGEDIIWCAQKFFQIYANKFENSSLDDLETYKIFREKSIEIFLDEIKADLANLSIKFDVFSSESELFRTEKVQKNLANLPFVYKKEEAIWLKTSKFGDQKDRVLVKKNGEFTYFSSDIAYHFEKINSNFKPDFLINIWGADHIGYVDRMKAALKTVNLNQKLDILLYQLVKLFKNGQEFKMSKRMGKTFTIKDLLELVDQDAIRYFISERSYNSLVEFDIGLAAKISLQNPLFLIQYAHARASKLLANSTIVPEKILKFEAENETILISKLKQFEEIVLKITKNYKINLLNKYLLELANLFNSFYSNSKIIGNQNQNSLLSLTKAVQIVLKNGLKLLGIKAKERI</sequence>
<organism>
    <name type="scientific">Mesomycoplasma hyopneumoniae (strain 7448)</name>
    <name type="common">Mycoplasma hyopneumoniae</name>
    <dbReference type="NCBI Taxonomy" id="262722"/>
    <lineage>
        <taxon>Bacteria</taxon>
        <taxon>Bacillati</taxon>
        <taxon>Mycoplasmatota</taxon>
        <taxon>Mycoplasmoidales</taxon>
        <taxon>Metamycoplasmataceae</taxon>
        <taxon>Mesomycoplasma</taxon>
    </lineage>
</organism>
<keyword id="KW-0030">Aminoacyl-tRNA synthetase</keyword>
<keyword id="KW-0067">ATP-binding</keyword>
<keyword id="KW-0963">Cytoplasm</keyword>
<keyword id="KW-0436">Ligase</keyword>
<keyword id="KW-0547">Nucleotide-binding</keyword>
<keyword id="KW-0648">Protein biosynthesis</keyword>
<dbReference type="EC" id="6.1.1.19" evidence="1"/>
<dbReference type="EMBL" id="AE017244">
    <property type="protein sequence ID" value="AAZ53389.1"/>
    <property type="molecule type" value="Genomic_DNA"/>
</dbReference>
<dbReference type="RefSeq" id="WP_011289935.1">
    <property type="nucleotide sequence ID" value="NC_007332.1"/>
</dbReference>
<dbReference type="SMR" id="Q4A900"/>
<dbReference type="KEGG" id="mhp:MHP7448_0012"/>
<dbReference type="HOGENOM" id="CLU_006406_0_1_14"/>
<dbReference type="Proteomes" id="UP000000553">
    <property type="component" value="Chromosome"/>
</dbReference>
<dbReference type="GO" id="GO:0005737">
    <property type="term" value="C:cytoplasm"/>
    <property type="evidence" value="ECO:0007669"/>
    <property type="project" value="UniProtKB-SubCell"/>
</dbReference>
<dbReference type="GO" id="GO:0004814">
    <property type="term" value="F:arginine-tRNA ligase activity"/>
    <property type="evidence" value="ECO:0007669"/>
    <property type="project" value="UniProtKB-UniRule"/>
</dbReference>
<dbReference type="GO" id="GO:0005524">
    <property type="term" value="F:ATP binding"/>
    <property type="evidence" value="ECO:0007669"/>
    <property type="project" value="UniProtKB-UniRule"/>
</dbReference>
<dbReference type="GO" id="GO:0006420">
    <property type="term" value="P:arginyl-tRNA aminoacylation"/>
    <property type="evidence" value="ECO:0007669"/>
    <property type="project" value="UniProtKB-UniRule"/>
</dbReference>
<dbReference type="CDD" id="cd00671">
    <property type="entry name" value="ArgRS_core"/>
    <property type="match status" value="1"/>
</dbReference>
<dbReference type="Gene3D" id="3.30.1360.70">
    <property type="entry name" value="Arginyl tRNA synthetase N-terminal domain"/>
    <property type="match status" value="1"/>
</dbReference>
<dbReference type="Gene3D" id="3.40.50.620">
    <property type="entry name" value="HUPs"/>
    <property type="match status" value="1"/>
</dbReference>
<dbReference type="Gene3D" id="1.10.730.10">
    <property type="entry name" value="Isoleucyl-tRNA Synthetase, Domain 1"/>
    <property type="match status" value="1"/>
</dbReference>
<dbReference type="HAMAP" id="MF_00123">
    <property type="entry name" value="Arg_tRNA_synth"/>
    <property type="match status" value="1"/>
</dbReference>
<dbReference type="InterPro" id="IPR001412">
    <property type="entry name" value="aa-tRNA-synth_I_CS"/>
</dbReference>
<dbReference type="InterPro" id="IPR001278">
    <property type="entry name" value="Arg-tRNA-ligase"/>
</dbReference>
<dbReference type="InterPro" id="IPR005148">
    <property type="entry name" value="Arg-tRNA-synth_N"/>
</dbReference>
<dbReference type="InterPro" id="IPR036695">
    <property type="entry name" value="Arg-tRNA-synth_N_sf"/>
</dbReference>
<dbReference type="InterPro" id="IPR035684">
    <property type="entry name" value="ArgRS_core"/>
</dbReference>
<dbReference type="InterPro" id="IPR008909">
    <property type="entry name" value="DALR_anticod-bd"/>
</dbReference>
<dbReference type="InterPro" id="IPR014729">
    <property type="entry name" value="Rossmann-like_a/b/a_fold"/>
</dbReference>
<dbReference type="InterPro" id="IPR009080">
    <property type="entry name" value="tRNAsynth_Ia_anticodon-bd"/>
</dbReference>
<dbReference type="NCBIfam" id="TIGR00456">
    <property type="entry name" value="argS"/>
    <property type="match status" value="1"/>
</dbReference>
<dbReference type="PANTHER" id="PTHR11956:SF5">
    <property type="entry name" value="ARGININE--TRNA LIGASE, CYTOPLASMIC"/>
    <property type="match status" value="1"/>
</dbReference>
<dbReference type="PANTHER" id="PTHR11956">
    <property type="entry name" value="ARGINYL-TRNA SYNTHETASE"/>
    <property type="match status" value="1"/>
</dbReference>
<dbReference type="Pfam" id="PF03485">
    <property type="entry name" value="Arg_tRNA_synt_N"/>
    <property type="match status" value="1"/>
</dbReference>
<dbReference type="Pfam" id="PF05746">
    <property type="entry name" value="DALR_1"/>
    <property type="match status" value="1"/>
</dbReference>
<dbReference type="Pfam" id="PF00750">
    <property type="entry name" value="tRNA-synt_1d"/>
    <property type="match status" value="1"/>
</dbReference>
<dbReference type="PRINTS" id="PR01038">
    <property type="entry name" value="TRNASYNTHARG"/>
</dbReference>
<dbReference type="SMART" id="SM01016">
    <property type="entry name" value="Arg_tRNA_synt_N"/>
    <property type="match status" value="1"/>
</dbReference>
<dbReference type="SMART" id="SM00836">
    <property type="entry name" value="DALR_1"/>
    <property type="match status" value="1"/>
</dbReference>
<dbReference type="SUPFAM" id="SSF47323">
    <property type="entry name" value="Anticodon-binding domain of a subclass of class I aminoacyl-tRNA synthetases"/>
    <property type="match status" value="1"/>
</dbReference>
<dbReference type="SUPFAM" id="SSF55190">
    <property type="entry name" value="Arginyl-tRNA synthetase (ArgRS), N-terminal 'additional' domain"/>
    <property type="match status" value="1"/>
</dbReference>
<dbReference type="SUPFAM" id="SSF52374">
    <property type="entry name" value="Nucleotidylyl transferase"/>
    <property type="match status" value="1"/>
</dbReference>
<dbReference type="PROSITE" id="PS00178">
    <property type="entry name" value="AA_TRNA_LIGASE_I"/>
    <property type="match status" value="1"/>
</dbReference>